<comment type="function">
    <text evidence="1">The glycine cleavage system catalyzes the degradation of glycine. The P protein binds the alpha-amino group of glycine through its pyridoxal phosphate cofactor; CO(2) is released and the remaining methylamine moiety is then transferred to the lipoamide cofactor of the H protein.</text>
</comment>
<comment type="catalytic activity">
    <reaction evidence="1">
        <text>N(6)-[(R)-lipoyl]-L-lysyl-[glycine-cleavage complex H protein] + glycine + H(+) = N(6)-[(R)-S(8)-aminomethyldihydrolipoyl]-L-lysyl-[glycine-cleavage complex H protein] + CO2</text>
        <dbReference type="Rhea" id="RHEA:24304"/>
        <dbReference type="Rhea" id="RHEA-COMP:10494"/>
        <dbReference type="Rhea" id="RHEA-COMP:10495"/>
        <dbReference type="ChEBI" id="CHEBI:15378"/>
        <dbReference type="ChEBI" id="CHEBI:16526"/>
        <dbReference type="ChEBI" id="CHEBI:57305"/>
        <dbReference type="ChEBI" id="CHEBI:83099"/>
        <dbReference type="ChEBI" id="CHEBI:83143"/>
        <dbReference type="EC" id="1.4.4.2"/>
    </reaction>
</comment>
<comment type="cofactor">
    <cofactor evidence="1">
        <name>pyridoxal 5'-phosphate</name>
        <dbReference type="ChEBI" id="CHEBI:597326"/>
    </cofactor>
</comment>
<comment type="subunit">
    <text evidence="1">The glycine cleavage system is composed of four proteins: P, T, L and H.</text>
</comment>
<comment type="similarity">
    <text evidence="1">Belongs to the GcvP family.</text>
</comment>
<sequence>MSRALDTHSDFIPRHIGPSEADQAKMLATIGCSSLDALLEEVVPPRIRNQAPLALPGARSEPDVLAELKQMAARNKVFRNYIGQGYYGTHTPNVVLRNVLENPAWYTAYTPYQPEISQGRLEALLNYQTMVADLTGLDISNASLLDEGTAAAEAMTLARRSAKSKSAVFFVSQHCHPQTIEVVRTRAQGLDIDVLVGDESQGLPECFGVLLQYPHSLGGVVNYRELAEAAHAQGAVVACATDLLALALLTPPGEWGADIAVGTAQRFGVPFGFGGPHAGFMACRDAFKRNMPGRLVGVSKDAQGNPALRLALQTREQHIRREKATSNICTAQVLLAVMAGLYAVWHGPAGLRRIATRVHTFAGVLRQHVQALGLTVENDSYFDTLLINTGPATPAVLRAAECAHINLRRVDAGRVAVSIDETVTVEDLQALINVFAAGLGKDDITLDAATLAPEAGLPAGTVRTSPILSHPVFSSVQSETDMLRYLRKLADKDLALDRSMIPLGSCTMKLNATAEMIPITWPEFALIHPFAPADQTAGYRELIERLSAALCEITGYDNISLQPNSGAQGEYAGLLAIRGYHQARGEHQRNICLIPSSAHGTNPASAQLAGMDVVVVASDDHGNVDLDDLRAKIEQVGDRLAALMITYPSTHGVFEETVTEICERVHAAGGQVYLDGANMNAMVGVAKPGKFGSDVSHLNLHKTFCIPHGGGGPGVGPVAVRAHLAPYLPGVLNEQGKLDAEAKVGPVSAAPYGSAGILAIPFVYISLMGAEGLRRATEVAILNANYVATRLREYYPVLYAGRHGRVAHECILDIRPLKESIGISAEDIAKRLMDYGFHAPTMSFPVAGTLMVEPTESEGLAELERFIDAMIAIRAEVAQVERGERDREDNVLKNAPHTAQMLLAEEWHHAYPRQQAAYPLASLRDGKYWPPVARVDNAYGDRNLVCSCLPIEAYI</sequence>
<accession>Q2KYL7</accession>
<evidence type="ECO:0000255" key="1">
    <source>
        <dbReference type="HAMAP-Rule" id="MF_00711"/>
    </source>
</evidence>
<gene>
    <name evidence="1" type="primary">gcvP</name>
    <name type="ordered locus">BAV0493</name>
</gene>
<reference key="1">
    <citation type="journal article" date="2006" name="J. Bacteriol.">
        <title>Comparison of the genome sequence of the poultry pathogen Bordetella avium with those of B. bronchiseptica, B. pertussis, and B. parapertussis reveals extensive diversity in surface structures associated with host interaction.</title>
        <authorList>
            <person name="Sebaihia M."/>
            <person name="Preston A."/>
            <person name="Maskell D.J."/>
            <person name="Kuzmiak H."/>
            <person name="Connell T.D."/>
            <person name="King N.D."/>
            <person name="Orndorff P.E."/>
            <person name="Miyamoto D.M."/>
            <person name="Thomson N.R."/>
            <person name="Harris D."/>
            <person name="Goble A."/>
            <person name="Lord A."/>
            <person name="Murphy L."/>
            <person name="Quail M.A."/>
            <person name="Rutter S."/>
            <person name="Squares R."/>
            <person name="Squares S."/>
            <person name="Woodward J."/>
            <person name="Parkhill J."/>
            <person name="Temple L.M."/>
        </authorList>
    </citation>
    <scope>NUCLEOTIDE SEQUENCE [LARGE SCALE GENOMIC DNA]</scope>
    <source>
        <strain>197N</strain>
    </source>
</reference>
<feature type="chain" id="PRO_1000045566" description="Glycine dehydrogenase (decarboxylating)">
    <location>
        <begin position="1"/>
        <end position="955"/>
    </location>
</feature>
<feature type="modified residue" description="N6-(pyridoxal phosphate)lysine" evidence="1">
    <location>
        <position position="702"/>
    </location>
</feature>
<keyword id="KW-0560">Oxidoreductase</keyword>
<keyword id="KW-0663">Pyridoxal phosphate</keyword>
<keyword id="KW-1185">Reference proteome</keyword>
<protein>
    <recommendedName>
        <fullName evidence="1">Glycine dehydrogenase (decarboxylating)</fullName>
        <ecNumber evidence="1">1.4.4.2</ecNumber>
    </recommendedName>
    <alternativeName>
        <fullName evidence="1">Glycine cleavage system P-protein</fullName>
    </alternativeName>
    <alternativeName>
        <fullName evidence="1">Glycine decarboxylase</fullName>
    </alternativeName>
    <alternativeName>
        <fullName evidence="1">Glycine dehydrogenase (aminomethyl-transferring)</fullName>
    </alternativeName>
</protein>
<organism>
    <name type="scientific">Bordetella avium (strain 197N)</name>
    <dbReference type="NCBI Taxonomy" id="360910"/>
    <lineage>
        <taxon>Bacteria</taxon>
        <taxon>Pseudomonadati</taxon>
        <taxon>Pseudomonadota</taxon>
        <taxon>Betaproteobacteria</taxon>
        <taxon>Burkholderiales</taxon>
        <taxon>Alcaligenaceae</taxon>
        <taxon>Bordetella</taxon>
    </lineage>
</organism>
<name>GCSP_BORA1</name>
<dbReference type="EC" id="1.4.4.2" evidence="1"/>
<dbReference type="EMBL" id="AM167904">
    <property type="protein sequence ID" value="CAJ48098.1"/>
    <property type="molecule type" value="Genomic_DNA"/>
</dbReference>
<dbReference type="RefSeq" id="WP_012416189.1">
    <property type="nucleotide sequence ID" value="NC_010645.1"/>
</dbReference>
<dbReference type="SMR" id="Q2KYL7"/>
<dbReference type="STRING" id="360910.BAV0493"/>
<dbReference type="KEGG" id="bav:BAV0493"/>
<dbReference type="eggNOG" id="COG0403">
    <property type="taxonomic scope" value="Bacteria"/>
</dbReference>
<dbReference type="eggNOG" id="COG1003">
    <property type="taxonomic scope" value="Bacteria"/>
</dbReference>
<dbReference type="HOGENOM" id="CLU_004620_2_1_4"/>
<dbReference type="OrthoDB" id="9801272at2"/>
<dbReference type="Proteomes" id="UP000001977">
    <property type="component" value="Chromosome"/>
</dbReference>
<dbReference type="GO" id="GO:0005829">
    <property type="term" value="C:cytosol"/>
    <property type="evidence" value="ECO:0007669"/>
    <property type="project" value="TreeGrafter"/>
</dbReference>
<dbReference type="GO" id="GO:0005960">
    <property type="term" value="C:glycine cleavage complex"/>
    <property type="evidence" value="ECO:0007669"/>
    <property type="project" value="TreeGrafter"/>
</dbReference>
<dbReference type="GO" id="GO:0016594">
    <property type="term" value="F:glycine binding"/>
    <property type="evidence" value="ECO:0007669"/>
    <property type="project" value="TreeGrafter"/>
</dbReference>
<dbReference type="GO" id="GO:0004375">
    <property type="term" value="F:glycine dehydrogenase (decarboxylating) activity"/>
    <property type="evidence" value="ECO:0007669"/>
    <property type="project" value="UniProtKB-EC"/>
</dbReference>
<dbReference type="GO" id="GO:0030170">
    <property type="term" value="F:pyridoxal phosphate binding"/>
    <property type="evidence" value="ECO:0007669"/>
    <property type="project" value="TreeGrafter"/>
</dbReference>
<dbReference type="GO" id="GO:0019464">
    <property type="term" value="P:glycine decarboxylation via glycine cleavage system"/>
    <property type="evidence" value="ECO:0007669"/>
    <property type="project" value="UniProtKB-UniRule"/>
</dbReference>
<dbReference type="CDD" id="cd00613">
    <property type="entry name" value="GDC-P"/>
    <property type="match status" value="2"/>
</dbReference>
<dbReference type="FunFam" id="3.40.640.10:FF:000005">
    <property type="entry name" value="Glycine dehydrogenase (decarboxylating), mitochondrial"/>
    <property type="match status" value="1"/>
</dbReference>
<dbReference type="FunFam" id="3.90.1150.10:FF:000007">
    <property type="entry name" value="Glycine dehydrogenase (decarboxylating), mitochondrial"/>
    <property type="match status" value="1"/>
</dbReference>
<dbReference type="FunFam" id="3.40.640.10:FF:000007">
    <property type="entry name" value="glycine dehydrogenase (Decarboxylating), mitochondrial"/>
    <property type="match status" value="1"/>
</dbReference>
<dbReference type="Gene3D" id="3.90.1150.10">
    <property type="entry name" value="Aspartate Aminotransferase, domain 1"/>
    <property type="match status" value="2"/>
</dbReference>
<dbReference type="Gene3D" id="3.40.640.10">
    <property type="entry name" value="Type I PLP-dependent aspartate aminotransferase-like (Major domain)"/>
    <property type="match status" value="2"/>
</dbReference>
<dbReference type="HAMAP" id="MF_00711">
    <property type="entry name" value="GcvP"/>
    <property type="match status" value="1"/>
</dbReference>
<dbReference type="InterPro" id="IPR003437">
    <property type="entry name" value="GcvP"/>
</dbReference>
<dbReference type="InterPro" id="IPR049316">
    <property type="entry name" value="GDC-P_C"/>
</dbReference>
<dbReference type="InterPro" id="IPR049315">
    <property type="entry name" value="GDC-P_N"/>
</dbReference>
<dbReference type="InterPro" id="IPR020581">
    <property type="entry name" value="GDC_P"/>
</dbReference>
<dbReference type="InterPro" id="IPR015424">
    <property type="entry name" value="PyrdxlP-dep_Trfase"/>
</dbReference>
<dbReference type="InterPro" id="IPR015421">
    <property type="entry name" value="PyrdxlP-dep_Trfase_major"/>
</dbReference>
<dbReference type="InterPro" id="IPR015422">
    <property type="entry name" value="PyrdxlP-dep_Trfase_small"/>
</dbReference>
<dbReference type="NCBIfam" id="TIGR00461">
    <property type="entry name" value="gcvP"/>
    <property type="match status" value="1"/>
</dbReference>
<dbReference type="NCBIfam" id="NF001696">
    <property type="entry name" value="PRK00451.1"/>
    <property type="match status" value="1"/>
</dbReference>
<dbReference type="NCBIfam" id="NF003346">
    <property type="entry name" value="PRK04366.1"/>
    <property type="match status" value="1"/>
</dbReference>
<dbReference type="PANTHER" id="PTHR11773:SF1">
    <property type="entry name" value="GLYCINE DEHYDROGENASE (DECARBOXYLATING), MITOCHONDRIAL"/>
    <property type="match status" value="1"/>
</dbReference>
<dbReference type="PANTHER" id="PTHR11773">
    <property type="entry name" value="GLYCINE DEHYDROGENASE, DECARBOXYLATING"/>
    <property type="match status" value="1"/>
</dbReference>
<dbReference type="Pfam" id="PF21478">
    <property type="entry name" value="GcvP2_C"/>
    <property type="match status" value="1"/>
</dbReference>
<dbReference type="Pfam" id="PF02347">
    <property type="entry name" value="GDC-P"/>
    <property type="match status" value="2"/>
</dbReference>
<dbReference type="SUPFAM" id="SSF53383">
    <property type="entry name" value="PLP-dependent transferases"/>
    <property type="match status" value="2"/>
</dbReference>
<proteinExistence type="inferred from homology"/>